<evidence type="ECO:0000250" key="1"/>
<evidence type="ECO:0000255" key="2"/>
<evidence type="ECO:0000305" key="3"/>
<accession>O48956</accession>
<reference key="1">
    <citation type="journal article" date="1998" name="Plant Mol. Biol.">
        <title>Cloning of three A-type cytochromes P450, CYP71E1, CYP98, and CYP99 from Sorghum bicolor (L.) Moench by a PCR approach and identification by expression in Escherichia coli of CYP71E1 as a multifunctional cytochrome P450 in the biosynthesis of the cyanogenic glucoside dhurrin.</title>
        <authorList>
            <person name="Bak S."/>
            <person name="Kahn R.A."/>
            <person name="Nielsen H.L."/>
            <person name="Moeller B.L."/>
            <person name="Halkier B.A."/>
        </authorList>
    </citation>
    <scope>NUCLEOTIDE SEQUENCE [MRNA]</scope>
    <source>
        <strain>cv. SS1000</strain>
        <tissue>Etiolated seedling</tissue>
    </source>
</reference>
<dbReference type="EC" id="1.14.-.-"/>
<dbReference type="EMBL" id="AF029856">
    <property type="protein sequence ID" value="AAC39316.1"/>
    <property type="molecule type" value="mRNA"/>
</dbReference>
<dbReference type="PIR" id="T14638">
    <property type="entry name" value="T14638"/>
</dbReference>
<dbReference type="RefSeq" id="XP_002440001.1">
    <property type="nucleotide sequence ID" value="XM_002439956.1"/>
</dbReference>
<dbReference type="SMR" id="O48956"/>
<dbReference type="EnsemblPlants" id="EES18431">
    <property type="protein sequence ID" value="EES18431"/>
    <property type="gene ID" value="SORBI_3009G181800"/>
</dbReference>
<dbReference type="GeneID" id="8077042"/>
<dbReference type="Gramene" id="EES18431">
    <property type="protein sequence ID" value="EES18431"/>
    <property type="gene ID" value="SORBI_3009G181800"/>
</dbReference>
<dbReference type="KEGG" id="sbi:8077042"/>
<dbReference type="eggNOG" id="KOG0156">
    <property type="taxonomic scope" value="Eukaryota"/>
</dbReference>
<dbReference type="HOGENOM" id="CLU_001570_4_0_1"/>
<dbReference type="OMA" id="RYGHVWK"/>
<dbReference type="OrthoDB" id="2789670at2759"/>
<dbReference type="ExpressionAtlas" id="O48956">
    <property type="expression patterns" value="baseline and differential"/>
</dbReference>
<dbReference type="GO" id="GO:0016020">
    <property type="term" value="C:membrane"/>
    <property type="evidence" value="ECO:0007669"/>
    <property type="project" value="UniProtKB-SubCell"/>
</dbReference>
<dbReference type="GO" id="GO:0020037">
    <property type="term" value="F:heme binding"/>
    <property type="evidence" value="ECO:0007669"/>
    <property type="project" value="InterPro"/>
</dbReference>
<dbReference type="GO" id="GO:0005506">
    <property type="term" value="F:iron ion binding"/>
    <property type="evidence" value="ECO:0007669"/>
    <property type="project" value="InterPro"/>
</dbReference>
<dbReference type="GO" id="GO:0004497">
    <property type="term" value="F:monooxygenase activity"/>
    <property type="evidence" value="ECO:0007669"/>
    <property type="project" value="UniProtKB-KW"/>
</dbReference>
<dbReference type="GO" id="GO:0016705">
    <property type="term" value="F:oxidoreductase activity, acting on paired donors, with incorporation or reduction of molecular oxygen"/>
    <property type="evidence" value="ECO:0007669"/>
    <property type="project" value="InterPro"/>
</dbReference>
<dbReference type="CDD" id="cd20656">
    <property type="entry name" value="CYP98"/>
    <property type="match status" value="1"/>
</dbReference>
<dbReference type="FunFam" id="1.10.630.10:FF:000039">
    <property type="entry name" value="Cytochrome P450"/>
    <property type="match status" value="1"/>
</dbReference>
<dbReference type="Gene3D" id="1.10.630.10">
    <property type="entry name" value="Cytochrome P450"/>
    <property type="match status" value="1"/>
</dbReference>
<dbReference type="InterPro" id="IPR001128">
    <property type="entry name" value="Cyt_P450"/>
</dbReference>
<dbReference type="InterPro" id="IPR017972">
    <property type="entry name" value="Cyt_P450_CS"/>
</dbReference>
<dbReference type="InterPro" id="IPR002401">
    <property type="entry name" value="Cyt_P450_E_grp-I"/>
</dbReference>
<dbReference type="InterPro" id="IPR036396">
    <property type="entry name" value="Cyt_P450_sf"/>
</dbReference>
<dbReference type="PANTHER" id="PTHR47944">
    <property type="entry name" value="CYTOCHROME P450 98A9"/>
    <property type="match status" value="1"/>
</dbReference>
<dbReference type="PANTHER" id="PTHR47944:SF10">
    <property type="entry name" value="CYTOCHROME P450 98A9"/>
    <property type="match status" value="1"/>
</dbReference>
<dbReference type="Pfam" id="PF00067">
    <property type="entry name" value="p450"/>
    <property type="match status" value="1"/>
</dbReference>
<dbReference type="PRINTS" id="PR00463">
    <property type="entry name" value="EP450I"/>
</dbReference>
<dbReference type="PRINTS" id="PR00385">
    <property type="entry name" value="P450"/>
</dbReference>
<dbReference type="SUPFAM" id="SSF48264">
    <property type="entry name" value="Cytochrome P450"/>
    <property type="match status" value="1"/>
</dbReference>
<dbReference type="PROSITE" id="PS00086">
    <property type="entry name" value="CYTOCHROME_P450"/>
    <property type="match status" value="1"/>
</dbReference>
<gene>
    <name type="primary">CYP98A1</name>
</gene>
<protein>
    <recommendedName>
        <fullName>Cytochrome P450 98A1</fullName>
        <ecNumber>1.14.-.-</ecNumber>
    </recommendedName>
</protein>
<comment type="cofactor">
    <cofactor evidence="1">
        <name>heme</name>
        <dbReference type="ChEBI" id="CHEBI:30413"/>
    </cofactor>
</comment>
<comment type="subcellular location">
    <subcellularLocation>
        <location evidence="3">Membrane</location>
        <topology evidence="3">Single-pass membrane protein</topology>
    </subcellularLocation>
</comment>
<comment type="similarity">
    <text evidence="3">Belongs to the cytochrome P450 family.</text>
</comment>
<organism>
    <name type="scientific">Sorghum bicolor</name>
    <name type="common">Sorghum</name>
    <name type="synonym">Sorghum vulgare</name>
    <dbReference type="NCBI Taxonomy" id="4558"/>
    <lineage>
        <taxon>Eukaryota</taxon>
        <taxon>Viridiplantae</taxon>
        <taxon>Streptophyta</taxon>
        <taxon>Embryophyta</taxon>
        <taxon>Tracheophyta</taxon>
        <taxon>Spermatophyta</taxon>
        <taxon>Magnoliopsida</taxon>
        <taxon>Liliopsida</taxon>
        <taxon>Poales</taxon>
        <taxon>Poaceae</taxon>
        <taxon>PACMAD clade</taxon>
        <taxon>Panicoideae</taxon>
        <taxon>Andropogonodae</taxon>
        <taxon>Andropogoneae</taxon>
        <taxon>Sorghinae</taxon>
        <taxon>Sorghum</taxon>
    </lineage>
</organism>
<name>C98A1_SORBI</name>
<feature type="chain" id="PRO_0000052197" description="Cytochrome P450 98A1">
    <location>
        <begin position="1"/>
        <end position="512"/>
    </location>
</feature>
<feature type="transmembrane region" description="Helical" evidence="2">
    <location>
        <begin position="3"/>
        <end position="23"/>
    </location>
</feature>
<feature type="binding site" description="axial binding residue" evidence="1">
    <location>
        <position position="441"/>
    </location>
    <ligand>
        <name>heme</name>
        <dbReference type="ChEBI" id="CHEBI:30413"/>
    </ligand>
    <ligandPart>
        <name>Fe</name>
        <dbReference type="ChEBI" id="CHEBI:18248"/>
    </ligandPart>
</feature>
<proteinExistence type="evidence at transcript level"/>
<keyword id="KW-0349">Heme</keyword>
<keyword id="KW-0408">Iron</keyword>
<keyword id="KW-0472">Membrane</keyword>
<keyword id="KW-0479">Metal-binding</keyword>
<keyword id="KW-0503">Monooxygenase</keyword>
<keyword id="KW-0560">Oxidoreductase</keyword>
<keyword id="KW-0812">Transmembrane</keyword>
<keyword id="KW-1133">Transmembrane helix</keyword>
<sequence length="512" mass="58272">MDASLLLSVALAVVLIPLSLALLNRLRLGRLPPGPRPWPVLGNLRQIKPIRCRCFQEWAERYGPVISVWFGSGLTVVVSTSELAKEVLKENDQQLADRPRNRSTQRFSRNGQDLIWADYGPHYIKVRKLCNLELFTPKRLEALRPIREDEVTAMVESVYRAATAPGNEGKPMVVRNHLSMVAFNNITRLAFGKRFMNANGDIDEQGREFKTIVNNGIKIGASLSVAEFIWYLRWLCPLNEELYKTHNERRDRLTMKIIEEHAKSLKESGAKQHFVDALFTLKQQYDLSEDTVIGLLWDMITAGMDTTVISVEWAMAELVRNPRVQKKLQEELDRVVGRDRVMLETDFQNLPYLQAVVKESLRLHPPTPLMLPHKASTNVKIGGYDIPKGANVMVNVWAVARDPKVWSNPLEYRPERFLEENIDIKGSDFRVLPFGAGRRVCPGAQLGINLVASMIGHLLHHFEWSLPEGTRPEDVNMMESPGLVTFMGTPLQAVAKPRLEKEELYNRVPVEM</sequence>